<dbReference type="EC" id="7.4.2.8" evidence="1"/>
<dbReference type="EMBL" id="CR555306">
    <property type="protein sequence ID" value="CAI06906.1"/>
    <property type="molecule type" value="Genomic_DNA"/>
</dbReference>
<dbReference type="RefSeq" id="WP_011236634.1">
    <property type="nucleotide sequence ID" value="NC_006513.1"/>
</dbReference>
<dbReference type="SMR" id="Q5P705"/>
<dbReference type="STRING" id="76114.ebA1433"/>
<dbReference type="KEGG" id="eba:ebA1433"/>
<dbReference type="eggNOG" id="COG0653">
    <property type="taxonomic scope" value="Bacteria"/>
</dbReference>
<dbReference type="HOGENOM" id="CLU_005314_3_0_4"/>
<dbReference type="OrthoDB" id="9805579at2"/>
<dbReference type="Proteomes" id="UP000006552">
    <property type="component" value="Chromosome"/>
</dbReference>
<dbReference type="GO" id="GO:0031522">
    <property type="term" value="C:cell envelope Sec protein transport complex"/>
    <property type="evidence" value="ECO:0007669"/>
    <property type="project" value="TreeGrafter"/>
</dbReference>
<dbReference type="GO" id="GO:0005829">
    <property type="term" value="C:cytosol"/>
    <property type="evidence" value="ECO:0007669"/>
    <property type="project" value="TreeGrafter"/>
</dbReference>
<dbReference type="GO" id="GO:0005886">
    <property type="term" value="C:plasma membrane"/>
    <property type="evidence" value="ECO:0007669"/>
    <property type="project" value="UniProtKB-SubCell"/>
</dbReference>
<dbReference type="GO" id="GO:0005524">
    <property type="term" value="F:ATP binding"/>
    <property type="evidence" value="ECO:0007669"/>
    <property type="project" value="UniProtKB-UniRule"/>
</dbReference>
<dbReference type="GO" id="GO:0046872">
    <property type="term" value="F:metal ion binding"/>
    <property type="evidence" value="ECO:0007669"/>
    <property type="project" value="UniProtKB-KW"/>
</dbReference>
<dbReference type="GO" id="GO:0008564">
    <property type="term" value="F:protein-exporting ATPase activity"/>
    <property type="evidence" value="ECO:0007669"/>
    <property type="project" value="UniProtKB-EC"/>
</dbReference>
<dbReference type="GO" id="GO:0065002">
    <property type="term" value="P:intracellular protein transmembrane transport"/>
    <property type="evidence" value="ECO:0007669"/>
    <property type="project" value="UniProtKB-UniRule"/>
</dbReference>
<dbReference type="GO" id="GO:0017038">
    <property type="term" value="P:protein import"/>
    <property type="evidence" value="ECO:0007669"/>
    <property type="project" value="InterPro"/>
</dbReference>
<dbReference type="GO" id="GO:0006605">
    <property type="term" value="P:protein targeting"/>
    <property type="evidence" value="ECO:0007669"/>
    <property type="project" value="UniProtKB-UniRule"/>
</dbReference>
<dbReference type="GO" id="GO:0043952">
    <property type="term" value="P:protein transport by the Sec complex"/>
    <property type="evidence" value="ECO:0007669"/>
    <property type="project" value="TreeGrafter"/>
</dbReference>
<dbReference type="CDD" id="cd17928">
    <property type="entry name" value="DEXDc_SecA"/>
    <property type="match status" value="1"/>
</dbReference>
<dbReference type="CDD" id="cd18803">
    <property type="entry name" value="SF2_C_secA"/>
    <property type="match status" value="1"/>
</dbReference>
<dbReference type="FunFam" id="3.40.50.300:FF:000113">
    <property type="entry name" value="Preprotein translocase subunit SecA"/>
    <property type="match status" value="1"/>
</dbReference>
<dbReference type="FunFam" id="3.90.1440.10:FF:000001">
    <property type="entry name" value="Preprotein translocase subunit SecA"/>
    <property type="match status" value="1"/>
</dbReference>
<dbReference type="FunFam" id="1.10.3060.10:FF:000003">
    <property type="entry name" value="Protein translocase subunit SecA"/>
    <property type="match status" value="1"/>
</dbReference>
<dbReference type="FunFam" id="3.40.50.300:FF:000334">
    <property type="entry name" value="Protein translocase subunit SecA"/>
    <property type="match status" value="1"/>
</dbReference>
<dbReference type="Gene3D" id="1.10.3060.10">
    <property type="entry name" value="Helical scaffold and wing domains of SecA"/>
    <property type="match status" value="1"/>
</dbReference>
<dbReference type="Gene3D" id="3.40.50.300">
    <property type="entry name" value="P-loop containing nucleotide triphosphate hydrolases"/>
    <property type="match status" value="2"/>
</dbReference>
<dbReference type="Gene3D" id="3.90.1440.10">
    <property type="entry name" value="SecA, preprotein cross-linking domain"/>
    <property type="match status" value="1"/>
</dbReference>
<dbReference type="HAMAP" id="MF_01382">
    <property type="entry name" value="SecA"/>
    <property type="match status" value="1"/>
</dbReference>
<dbReference type="InterPro" id="IPR014001">
    <property type="entry name" value="Helicase_ATP-bd"/>
</dbReference>
<dbReference type="InterPro" id="IPR001650">
    <property type="entry name" value="Helicase_C-like"/>
</dbReference>
<dbReference type="InterPro" id="IPR027417">
    <property type="entry name" value="P-loop_NTPase"/>
</dbReference>
<dbReference type="InterPro" id="IPR004027">
    <property type="entry name" value="SEC_C_motif"/>
</dbReference>
<dbReference type="InterPro" id="IPR000185">
    <property type="entry name" value="SecA"/>
</dbReference>
<dbReference type="InterPro" id="IPR020937">
    <property type="entry name" value="SecA_CS"/>
</dbReference>
<dbReference type="InterPro" id="IPR011115">
    <property type="entry name" value="SecA_DEAD"/>
</dbReference>
<dbReference type="InterPro" id="IPR014018">
    <property type="entry name" value="SecA_motor_DEAD"/>
</dbReference>
<dbReference type="InterPro" id="IPR011130">
    <property type="entry name" value="SecA_preprotein_X-link_dom"/>
</dbReference>
<dbReference type="InterPro" id="IPR044722">
    <property type="entry name" value="SecA_SF2_C"/>
</dbReference>
<dbReference type="InterPro" id="IPR011116">
    <property type="entry name" value="SecA_Wing/Scaffold"/>
</dbReference>
<dbReference type="InterPro" id="IPR036266">
    <property type="entry name" value="SecA_Wing/Scaffold_sf"/>
</dbReference>
<dbReference type="InterPro" id="IPR036670">
    <property type="entry name" value="SecA_X-link_sf"/>
</dbReference>
<dbReference type="NCBIfam" id="NF009538">
    <property type="entry name" value="PRK12904.1"/>
    <property type="match status" value="1"/>
</dbReference>
<dbReference type="NCBIfam" id="TIGR00963">
    <property type="entry name" value="secA"/>
    <property type="match status" value="1"/>
</dbReference>
<dbReference type="PANTHER" id="PTHR30612:SF0">
    <property type="entry name" value="CHLOROPLAST PROTEIN-TRANSPORTING ATPASE"/>
    <property type="match status" value="1"/>
</dbReference>
<dbReference type="PANTHER" id="PTHR30612">
    <property type="entry name" value="SECA INNER MEMBRANE COMPONENT OF SEC PROTEIN SECRETION SYSTEM"/>
    <property type="match status" value="1"/>
</dbReference>
<dbReference type="Pfam" id="PF21090">
    <property type="entry name" value="P-loop_SecA"/>
    <property type="match status" value="1"/>
</dbReference>
<dbReference type="Pfam" id="PF02810">
    <property type="entry name" value="SEC-C"/>
    <property type="match status" value="1"/>
</dbReference>
<dbReference type="Pfam" id="PF07517">
    <property type="entry name" value="SecA_DEAD"/>
    <property type="match status" value="1"/>
</dbReference>
<dbReference type="Pfam" id="PF01043">
    <property type="entry name" value="SecA_PP_bind"/>
    <property type="match status" value="1"/>
</dbReference>
<dbReference type="Pfam" id="PF07516">
    <property type="entry name" value="SecA_SW"/>
    <property type="match status" value="1"/>
</dbReference>
<dbReference type="PRINTS" id="PR00906">
    <property type="entry name" value="SECA"/>
</dbReference>
<dbReference type="SMART" id="SM00957">
    <property type="entry name" value="SecA_DEAD"/>
    <property type="match status" value="1"/>
</dbReference>
<dbReference type="SMART" id="SM00958">
    <property type="entry name" value="SecA_PP_bind"/>
    <property type="match status" value="1"/>
</dbReference>
<dbReference type="SUPFAM" id="SSF81886">
    <property type="entry name" value="Helical scaffold and wing domains of SecA"/>
    <property type="match status" value="1"/>
</dbReference>
<dbReference type="SUPFAM" id="SSF52540">
    <property type="entry name" value="P-loop containing nucleoside triphosphate hydrolases"/>
    <property type="match status" value="2"/>
</dbReference>
<dbReference type="SUPFAM" id="SSF81767">
    <property type="entry name" value="Pre-protein crosslinking domain of SecA"/>
    <property type="match status" value="1"/>
</dbReference>
<dbReference type="PROSITE" id="PS01312">
    <property type="entry name" value="SECA"/>
    <property type="match status" value="1"/>
</dbReference>
<dbReference type="PROSITE" id="PS51196">
    <property type="entry name" value="SECA_MOTOR_DEAD"/>
    <property type="match status" value="1"/>
</dbReference>
<name>SECA_AROAE</name>
<keyword id="KW-0067">ATP-binding</keyword>
<keyword id="KW-0997">Cell inner membrane</keyword>
<keyword id="KW-1003">Cell membrane</keyword>
<keyword id="KW-0963">Cytoplasm</keyword>
<keyword id="KW-0472">Membrane</keyword>
<keyword id="KW-0479">Metal-binding</keyword>
<keyword id="KW-0547">Nucleotide-binding</keyword>
<keyword id="KW-0653">Protein transport</keyword>
<keyword id="KW-1185">Reference proteome</keyword>
<keyword id="KW-1278">Translocase</keyword>
<keyword id="KW-0811">Translocation</keyword>
<keyword id="KW-0813">Transport</keyword>
<keyword id="KW-0862">Zinc</keyword>
<evidence type="ECO:0000255" key="1">
    <source>
        <dbReference type="HAMAP-Rule" id="MF_01382"/>
    </source>
</evidence>
<gene>
    <name evidence="1" type="primary">secA</name>
    <name type="ordered locus">AZOSEA07830</name>
    <name type="ORF">ebA1433</name>
</gene>
<feature type="chain" id="PRO_0000320729" description="Protein translocase subunit SecA">
    <location>
        <begin position="1"/>
        <end position="907"/>
    </location>
</feature>
<feature type="binding site" evidence="1">
    <location>
        <position position="87"/>
    </location>
    <ligand>
        <name>ATP</name>
        <dbReference type="ChEBI" id="CHEBI:30616"/>
    </ligand>
</feature>
<feature type="binding site" evidence="1">
    <location>
        <begin position="105"/>
        <end position="109"/>
    </location>
    <ligand>
        <name>ATP</name>
        <dbReference type="ChEBI" id="CHEBI:30616"/>
    </ligand>
</feature>
<feature type="binding site" evidence="1">
    <location>
        <position position="511"/>
    </location>
    <ligand>
        <name>ATP</name>
        <dbReference type="ChEBI" id="CHEBI:30616"/>
    </ligand>
</feature>
<feature type="binding site" evidence="1">
    <location>
        <position position="891"/>
    </location>
    <ligand>
        <name>Zn(2+)</name>
        <dbReference type="ChEBI" id="CHEBI:29105"/>
    </ligand>
</feature>
<feature type="binding site" evidence="1">
    <location>
        <position position="893"/>
    </location>
    <ligand>
        <name>Zn(2+)</name>
        <dbReference type="ChEBI" id="CHEBI:29105"/>
    </ligand>
</feature>
<feature type="binding site" evidence="1">
    <location>
        <position position="902"/>
    </location>
    <ligand>
        <name>Zn(2+)</name>
        <dbReference type="ChEBI" id="CHEBI:29105"/>
    </ligand>
</feature>
<feature type="binding site" evidence="1">
    <location>
        <position position="903"/>
    </location>
    <ligand>
        <name>Zn(2+)</name>
        <dbReference type="ChEBI" id="CHEBI:29105"/>
    </ligand>
</feature>
<protein>
    <recommendedName>
        <fullName evidence="1">Protein translocase subunit SecA</fullName>
        <ecNumber evidence="1">7.4.2.8</ecNumber>
    </recommendedName>
</protein>
<proteinExistence type="inferred from homology"/>
<sequence>MISGLLKKIFGSRNDRLIRQYSQTVRAINALEPEISALSDEALQAKTADFKQRVANGESLDSILPEAFAVVREAGKRVHGMRHFDVQLIGGMVLHNGKISEMRTGEGKTLVATLPAYLNALTGKGVHVITVNDYLASRDADWMGRIYGFLGLTTGCNLSRMGHEAKQAAYASDITYGTNNEFGFDYLRDNMVYSTGERVQRGLSFAIVDEVDSILIDEARTPLIISGQAEDHTDLYLKLNQVAPMLAEQEGEGDNVIKPGDYTLDLKARQVLLTEQGHENAEQILTRMGLLAEGTSLYDPGNILLVHHLYAALRAHSLYHKDQHYVVQNNEVVIVDEFTGRLMAGRRWSDGLHQAVEAKESVRIQAENQTLASITFQNYFRMYGKLAGMTGTADTEAFEFHSIYGLETVVVPTNRAMVRKDENDKVYRTAKEKWDAVIADIRGCVERGQPVLVGTTSIEINEFLSGELNRVDLSHQVLNAKQHEHEAEIVAQAGRPGVITIATNMAGRGTDIVLGGSIERQLAAVRDDETLTPEQKEARTAALREEWKPVHEQVLANGGLHIIGTERHESRRIDNQLRGRAGRQGDPGSSRFYLSLEDPLMKIFAGERLNAIMVRLKMPEGEAIEHAMVTRSLESAQRKVEQRNFDIRKQLLEYDDVANDQRKVIYQQRNELLEADDISETIRAMRQGVLHDSFRVHVPVDSVEEQWDIAALEQALASEFQLRLPIGEWLKAEPNLDDETILKRLLAAAEEQYAVKTAQVDPVAWHQFERNVMLQSLDTHWREHLAALDHLRQGIHLRGYAQKNPKQEYKREAFELFETLLDTVRNDVSKLLMTVQVRTEAQLEEAEVPPELENVQYQHAAFDEALGVATAPEAAQAAAPAGPKIGRNDPCPCGSGKKYKHCHGKLS</sequence>
<organism>
    <name type="scientific">Aromatoleum aromaticum (strain DSM 19018 / LMG 30748 / EbN1)</name>
    <name type="common">Azoarcus sp. (strain EbN1)</name>
    <dbReference type="NCBI Taxonomy" id="76114"/>
    <lineage>
        <taxon>Bacteria</taxon>
        <taxon>Pseudomonadati</taxon>
        <taxon>Pseudomonadota</taxon>
        <taxon>Betaproteobacteria</taxon>
        <taxon>Rhodocyclales</taxon>
        <taxon>Rhodocyclaceae</taxon>
        <taxon>Aromatoleum</taxon>
    </lineage>
</organism>
<reference key="1">
    <citation type="journal article" date="2005" name="Arch. Microbiol.">
        <title>The genome sequence of an anaerobic aromatic-degrading denitrifying bacterium, strain EbN1.</title>
        <authorList>
            <person name="Rabus R."/>
            <person name="Kube M."/>
            <person name="Heider J."/>
            <person name="Beck A."/>
            <person name="Heitmann K."/>
            <person name="Widdel F."/>
            <person name="Reinhardt R."/>
        </authorList>
    </citation>
    <scope>NUCLEOTIDE SEQUENCE [LARGE SCALE GENOMIC DNA]</scope>
    <source>
        <strain>DSM 19018 / LMG 30748 / EbN1</strain>
    </source>
</reference>
<accession>Q5P705</accession>
<comment type="function">
    <text evidence="1">Part of the Sec protein translocase complex. Interacts with the SecYEG preprotein conducting channel. Has a central role in coupling the hydrolysis of ATP to the transfer of proteins into and across the cell membrane, serving both as a receptor for the preprotein-SecB complex and as an ATP-driven molecular motor driving the stepwise translocation of polypeptide chains across the membrane.</text>
</comment>
<comment type="catalytic activity">
    <reaction evidence="1">
        <text>ATP + H2O + cellular proteinSide 1 = ADP + phosphate + cellular proteinSide 2.</text>
        <dbReference type="EC" id="7.4.2.8"/>
    </reaction>
</comment>
<comment type="cofactor">
    <cofactor evidence="1">
        <name>Zn(2+)</name>
        <dbReference type="ChEBI" id="CHEBI:29105"/>
    </cofactor>
    <text evidence="1">May bind 1 zinc ion per subunit.</text>
</comment>
<comment type="subunit">
    <text evidence="1">Monomer and homodimer. Part of the essential Sec protein translocation apparatus which comprises SecA, SecYEG and auxiliary proteins SecDF-YajC and YidC.</text>
</comment>
<comment type="subcellular location">
    <subcellularLocation>
        <location evidence="1">Cell inner membrane</location>
        <topology evidence="1">Peripheral membrane protein</topology>
        <orientation evidence="1">Cytoplasmic side</orientation>
    </subcellularLocation>
    <subcellularLocation>
        <location evidence="1">Cytoplasm</location>
    </subcellularLocation>
    <text evidence="1">Distribution is 50-50.</text>
</comment>
<comment type="similarity">
    <text evidence="1">Belongs to the SecA family.</text>
</comment>